<dbReference type="EC" id="3.1.4.11" evidence="2"/>
<dbReference type="EMBL" id="BC108618">
    <property type="protein sequence ID" value="AAI08619.1"/>
    <property type="molecule type" value="mRNA"/>
</dbReference>
<dbReference type="RefSeq" id="NP_001090146.1">
    <property type="nucleotide sequence ID" value="NM_001096677.1"/>
</dbReference>
<dbReference type="SMR" id="Q32NH8"/>
<dbReference type="DNASU" id="735225"/>
<dbReference type="GeneID" id="735225"/>
<dbReference type="KEGG" id="xla:735225"/>
<dbReference type="AGR" id="Xenbase:XB-GENE-965139"/>
<dbReference type="CTD" id="735225"/>
<dbReference type="Xenbase" id="XB-GENE-965139">
    <property type="gene designation" value="plcd4.L"/>
</dbReference>
<dbReference type="OMA" id="NCQLHVE"/>
<dbReference type="OrthoDB" id="269822at2759"/>
<dbReference type="Proteomes" id="UP000186698">
    <property type="component" value="Chromosome 9_10L"/>
</dbReference>
<dbReference type="Bgee" id="735225">
    <property type="expression patterns" value="Expressed in camera-type eye and 15 other cell types or tissues"/>
</dbReference>
<dbReference type="GO" id="GO:0005783">
    <property type="term" value="C:endoplasmic reticulum"/>
    <property type="evidence" value="ECO:0007669"/>
    <property type="project" value="UniProtKB-SubCell"/>
</dbReference>
<dbReference type="GO" id="GO:0005634">
    <property type="term" value="C:nucleus"/>
    <property type="evidence" value="ECO:0007669"/>
    <property type="project" value="UniProtKB-SubCell"/>
</dbReference>
<dbReference type="GO" id="GO:0005886">
    <property type="term" value="C:plasma membrane"/>
    <property type="evidence" value="ECO:0000318"/>
    <property type="project" value="GO_Central"/>
</dbReference>
<dbReference type="GO" id="GO:0005509">
    <property type="term" value="F:calcium ion binding"/>
    <property type="evidence" value="ECO:0007669"/>
    <property type="project" value="InterPro"/>
</dbReference>
<dbReference type="GO" id="GO:0004435">
    <property type="term" value="F:phosphatidylinositol-4,5-bisphosphate phospholipase C activity"/>
    <property type="evidence" value="ECO:0000318"/>
    <property type="project" value="GO_Central"/>
</dbReference>
<dbReference type="GO" id="GO:0035556">
    <property type="term" value="P:intracellular signal transduction"/>
    <property type="evidence" value="ECO:0007669"/>
    <property type="project" value="InterPro"/>
</dbReference>
<dbReference type="GO" id="GO:0016042">
    <property type="term" value="P:lipid catabolic process"/>
    <property type="evidence" value="ECO:0007669"/>
    <property type="project" value="UniProtKB-KW"/>
</dbReference>
<dbReference type="CDD" id="cd00275">
    <property type="entry name" value="C2_PLC_like"/>
    <property type="match status" value="1"/>
</dbReference>
<dbReference type="CDD" id="cd16219">
    <property type="entry name" value="EFh_PI-PLCdelta4"/>
    <property type="match status" value="1"/>
</dbReference>
<dbReference type="CDD" id="cd13363">
    <property type="entry name" value="PH_PLC_delta"/>
    <property type="match status" value="1"/>
</dbReference>
<dbReference type="CDD" id="cd08631">
    <property type="entry name" value="PI-PLCc_delta4"/>
    <property type="match status" value="1"/>
</dbReference>
<dbReference type="FunFam" id="1.10.238.10:FF:000005">
    <property type="entry name" value="Phosphoinositide phospholipase C"/>
    <property type="match status" value="1"/>
</dbReference>
<dbReference type="FunFam" id="1.10.238.10:FF:000145">
    <property type="entry name" value="Phosphoinositide phospholipase C"/>
    <property type="match status" value="1"/>
</dbReference>
<dbReference type="FunFam" id="2.30.29.30:FF:000088">
    <property type="entry name" value="Phosphoinositide phospholipase C"/>
    <property type="match status" value="1"/>
</dbReference>
<dbReference type="FunFam" id="2.60.40.150:FF:000058">
    <property type="entry name" value="Phosphoinositide phospholipase C"/>
    <property type="match status" value="1"/>
</dbReference>
<dbReference type="FunFam" id="3.20.20.190:FF:000020">
    <property type="entry name" value="Phosphoinositide phospholipase C"/>
    <property type="match status" value="1"/>
</dbReference>
<dbReference type="Gene3D" id="2.60.40.150">
    <property type="entry name" value="C2 domain"/>
    <property type="match status" value="1"/>
</dbReference>
<dbReference type="Gene3D" id="1.10.238.10">
    <property type="entry name" value="EF-hand"/>
    <property type="match status" value="2"/>
</dbReference>
<dbReference type="Gene3D" id="3.20.20.190">
    <property type="entry name" value="Phosphatidylinositol (PI) phosphodiesterase"/>
    <property type="match status" value="1"/>
</dbReference>
<dbReference type="Gene3D" id="2.30.29.30">
    <property type="entry name" value="Pleckstrin-homology domain (PH domain)/Phosphotyrosine-binding domain (PTB)"/>
    <property type="match status" value="1"/>
</dbReference>
<dbReference type="InterPro" id="IPR000008">
    <property type="entry name" value="C2_dom"/>
</dbReference>
<dbReference type="InterPro" id="IPR035892">
    <property type="entry name" value="C2_domain_sf"/>
</dbReference>
<dbReference type="InterPro" id="IPR011992">
    <property type="entry name" value="EF-hand-dom_pair"/>
</dbReference>
<dbReference type="InterPro" id="IPR018247">
    <property type="entry name" value="EF_Hand_1_Ca_BS"/>
</dbReference>
<dbReference type="InterPro" id="IPR002048">
    <property type="entry name" value="EF_hand_dom"/>
</dbReference>
<dbReference type="InterPro" id="IPR011993">
    <property type="entry name" value="PH-like_dom_sf"/>
</dbReference>
<dbReference type="InterPro" id="IPR001849">
    <property type="entry name" value="PH_domain"/>
</dbReference>
<dbReference type="InterPro" id="IPR001192">
    <property type="entry name" value="PI-PLC_fam"/>
</dbReference>
<dbReference type="InterPro" id="IPR017946">
    <property type="entry name" value="PLC-like_Pdiesterase_TIM-brl"/>
</dbReference>
<dbReference type="InterPro" id="IPR015359">
    <property type="entry name" value="PLC_EF-hand-like"/>
</dbReference>
<dbReference type="InterPro" id="IPR000909">
    <property type="entry name" value="PLipase_C_PInositol-sp_X_dom"/>
</dbReference>
<dbReference type="InterPro" id="IPR001711">
    <property type="entry name" value="PLipase_C_Pinositol-sp_Y"/>
</dbReference>
<dbReference type="PANTHER" id="PTHR10336:SF31">
    <property type="entry name" value="1-PHOSPHATIDYLINOSITOL 4,5-BISPHOSPHATE PHOSPHODIESTERASE DELTA-4"/>
    <property type="match status" value="1"/>
</dbReference>
<dbReference type="PANTHER" id="PTHR10336">
    <property type="entry name" value="PHOSPHOINOSITIDE-SPECIFIC PHOSPHOLIPASE C FAMILY PROTEIN"/>
    <property type="match status" value="1"/>
</dbReference>
<dbReference type="Pfam" id="PF00168">
    <property type="entry name" value="C2"/>
    <property type="match status" value="1"/>
</dbReference>
<dbReference type="Pfam" id="PF09279">
    <property type="entry name" value="EF-hand_like"/>
    <property type="match status" value="1"/>
</dbReference>
<dbReference type="Pfam" id="PF00169">
    <property type="entry name" value="PH"/>
    <property type="match status" value="1"/>
</dbReference>
<dbReference type="Pfam" id="PF00388">
    <property type="entry name" value="PI-PLC-X"/>
    <property type="match status" value="1"/>
</dbReference>
<dbReference type="Pfam" id="PF00387">
    <property type="entry name" value="PI-PLC-Y"/>
    <property type="match status" value="1"/>
</dbReference>
<dbReference type="PRINTS" id="PR00390">
    <property type="entry name" value="PHPHLIPASEC"/>
</dbReference>
<dbReference type="SMART" id="SM00239">
    <property type="entry name" value="C2"/>
    <property type="match status" value="1"/>
</dbReference>
<dbReference type="SMART" id="SM00054">
    <property type="entry name" value="EFh"/>
    <property type="match status" value="3"/>
</dbReference>
<dbReference type="SMART" id="SM00233">
    <property type="entry name" value="PH"/>
    <property type="match status" value="1"/>
</dbReference>
<dbReference type="SMART" id="SM00148">
    <property type="entry name" value="PLCXc"/>
    <property type="match status" value="1"/>
</dbReference>
<dbReference type="SMART" id="SM00149">
    <property type="entry name" value="PLCYc"/>
    <property type="match status" value="1"/>
</dbReference>
<dbReference type="SUPFAM" id="SSF49562">
    <property type="entry name" value="C2 domain (Calcium/lipid-binding domain, CaLB)"/>
    <property type="match status" value="1"/>
</dbReference>
<dbReference type="SUPFAM" id="SSF47473">
    <property type="entry name" value="EF-hand"/>
    <property type="match status" value="1"/>
</dbReference>
<dbReference type="SUPFAM" id="SSF50729">
    <property type="entry name" value="PH domain-like"/>
    <property type="match status" value="1"/>
</dbReference>
<dbReference type="SUPFAM" id="SSF51695">
    <property type="entry name" value="PLC-like phosphodiesterases"/>
    <property type="match status" value="1"/>
</dbReference>
<dbReference type="PROSITE" id="PS50004">
    <property type="entry name" value="C2"/>
    <property type="match status" value="1"/>
</dbReference>
<dbReference type="PROSITE" id="PS00018">
    <property type="entry name" value="EF_HAND_1"/>
    <property type="match status" value="2"/>
</dbReference>
<dbReference type="PROSITE" id="PS50222">
    <property type="entry name" value="EF_HAND_2"/>
    <property type="match status" value="3"/>
</dbReference>
<dbReference type="PROSITE" id="PS50003">
    <property type="entry name" value="PH_DOMAIN"/>
    <property type="match status" value="1"/>
</dbReference>
<dbReference type="PROSITE" id="PS50007">
    <property type="entry name" value="PIPLC_X_DOMAIN"/>
    <property type="match status" value="1"/>
</dbReference>
<dbReference type="PROSITE" id="PS50008">
    <property type="entry name" value="PIPLC_Y_DOMAIN"/>
    <property type="match status" value="1"/>
</dbReference>
<protein>
    <recommendedName>
        <fullName>1-phosphatidylinositol 4,5-bisphosphate phosphodiesterase delta-4</fullName>
        <ecNumber evidence="2">3.1.4.11</ecNumber>
    </recommendedName>
    <alternativeName>
        <fullName>Phosphoinositide phospholipase C-delta-4</fullName>
    </alternativeName>
    <alternativeName>
        <fullName>Phospholipase C-delta-4</fullName>
        <shortName>PLC-delta-4</shortName>
    </alternativeName>
</protein>
<accession>Q32NH8</accession>
<sequence length="758" mass="87417">MTSPCSARLQLDENLQLMQAGSPMRKVKSRSWKKQRYFKLQEDCMTIWYNSKKTGNTKSTFSISDIETVREGHQSEVLQSIAEEFKPELCFTIVFHGRRANLDLVANTPEEAQCWIQGLEKLIETVTNMDRKDLMDQWICDWFQKADKNKDGRMNFKEVQDLLKMMNVDMSEHHAFRLFQMADKSESGTLEGEEFVLFYKALTQRDEVLKIFQDFSKDGKKLTLLEFVDFLQQGQLEEENTEEIAMDLIARYEPSDTAKKLHAMSIDGFLVYLCSPEGSIFNVAHEQLYQDMMQPLCHYFISSSHNTYLMEDQIRGQSSIEGYIRALKRGCRCVEVDTWDGPNGEPIVYHGRTFTSKILFKDVISAIDKYAFRVSDYPVILSLENHCGVEQQDAMAQHLKSILGNKLVMSTLDGRIPVRLPSPDELRGKILLKGKKIGRLEDSLEEQPDDSLGEVSDEEENIEVEEERNEDKKRAKKSKERLSQELSDCVIYCKSVPFVSFQHSRAHYILYEMSSVTEYKARKLVREPGNDFVRHNAWQLMRIYPTGLRTDSSNYNPQDMWNVGCQMTALNFQTAGVEMDLNDGLFRQNARCGYVLKPSFMRHVETTFNPDQPQGTEGYSPVNLSILVISAQQLPKVENSKEGSIVDPLVRVEIFGVPIDQTKQETKYIENNGFNPMWYETLHFKIHVPELALVRFVVEDYDKTSRNDFVGQYTLPFKSIKSGYRHIHLLSRDGTKIPPASLFVHIRVTDASQPEQDT</sequence>
<evidence type="ECO:0000250" key="1"/>
<evidence type="ECO:0000250" key="2">
    <source>
        <dbReference type="UniProtKB" id="Q9BRC7"/>
    </source>
</evidence>
<evidence type="ECO:0000255" key="3">
    <source>
        <dbReference type="PROSITE-ProRule" id="PRU00041"/>
    </source>
</evidence>
<evidence type="ECO:0000255" key="4">
    <source>
        <dbReference type="PROSITE-ProRule" id="PRU00145"/>
    </source>
</evidence>
<evidence type="ECO:0000255" key="5">
    <source>
        <dbReference type="PROSITE-ProRule" id="PRU00270"/>
    </source>
</evidence>
<evidence type="ECO:0000255" key="6">
    <source>
        <dbReference type="PROSITE-ProRule" id="PRU00271"/>
    </source>
</evidence>
<evidence type="ECO:0000255" key="7">
    <source>
        <dbReference type="PROSITE-ProRule" id="PRU00448"/>
    </source>
</evidence>
<evidence type="ECO:0000256" key="8">
    <source>
        <dbReference type="SAM" id="MobiDB-lite"/>
    </source>
</evidence>
<keyword id="KW-0106">Calcium</keyword>
<keyword id="KW-0963">Cytoplasm</keyword>
<keyword id="KW-0256">Endoplasmic reticulum</keyword>
<keyword id="KW-0378">Hydrolase</keyword>
<keyword id="KW-0442">Lipid degradation</keyword>
<keyword id="KW-0443">Lipid metabolism</keyword>
<keyword id="KW-0472">Membrane</keyword>
<keyword id="KW-0479">Metal-binding</keyword>
<keyword id="KW-0539">Nucleus</keyword>
<keyword id="KW-1185">Reference proteome</keyword>
<keyword id="KW-0677">Repeat</keyword>
<keyword id="KW-0807">Transducer</keyword>
<name>PLCD4_XENLA</name>
<comment type="function">
    <text evidence="1">Hydrolyzes the phosphatidylinositol 4,5-bisphosphate (PIP2) to generate 2 second messenger molecules diacylglycerol (DAG) and inositol 1,4,5-trisphosphate (IP3). DAG mediates the activation of protein kinase C (PKC), while IP3 releases Ca(2+) from intracellular stores (By similarity).</text>
</comment>
<comment type="catalytic activity">
    <reaction evidence="2">
        <text>a 1,2-diacyl-sn-glycero-3-phospho-(1D-myo-inositol-4,5-bisphosphate) + H2O = 1D-myo-inositol 1,4,5-trisphosphate + a 1,2-diacyl-sn-glycerol + H(+)</text>
        <dbReference type="Rhea" id="RHEA:33179"/>
        <dbReference type="ChEBI" id="CHEBI:15377"/>
        <dbReference type="ChEBI" id="CHEBI:15378"/>
        <dbReference type="ChEBI" id="CHEBI:17815"/>
        <dbReference type="ChEBI" id="CHEBI:58456"/>
        <dbReference type="ChEBI" id="CHEBI:203600"/>
        <dbReference type="EC" id="3.1.4.11"/>
    </reaction>
    <physiologicalReaction direction="left-to-right" evidence="2">
        <dbReference type="Rhea" id="RHEA:33180"/>
    </physiologicalReaction>
</comment>
<comment type="catalytic activity">
    <reaction evidence="2">
        <text>a 1,2-diacyl-sn-glycero-3-phospho-(1D-myo-inositol) + H2O = 1D-myo-inositol 1-phosphate + a 1,2-diacyl-sn-glycerol + H(+)</text>
        <dbReference type="Rhea" id="RHEA:43484"/>
        <dbReference type="ChEBI" id="CHEBI:15377"/>
        <dbReference type="ChEBI" id="CHEBI:15378"/>
        <dbReference type="ChEBI" id="CHEBI:17815"/>
        <dbReference type="ChEBI" id="CHEBI:57880"/>
        <dbReference type="ChEBI" id="CHEBI:58433"/>
    </reaction>
    <physiologicalReaction direction="left-to-right" evidence="2">
        <dbReference type="Rhea" id="RHEA:43485"/>
    </physiologicalReaction>
</comment>
<comment type="cofactor">
    <cofactor evidence="3">
        <name>Ca(2+)</name>
        <dbReference type="ChEBI" id="CHEBI:29108"/>
    </cofactor>
    <text evidence="1">Binds 5 Ca(2+) ions per subunit. Two of the Ca(2+) ions are bound to the C2 domain.</text>
</comment>
<comment type="subcellular location">
    <subcellularLocation>
        <location evidence="1">Membrane</location>
        <topology evidence="1">Peripheral membrane protein</topology>
    </subcellularLocation>
    <subcellularLocation>
        <location evidence="1">Nucleus</location>
    </subcellularLocation>
    <subcellularLocation>
        <location evidence="1">Cytoplasm</location>
    </subcellularLocation>
    <subcellularLocation>
        <location evidence="1">Endoplasmic reticulum</location>
    </subcellularLocation>
    <text evidence="1">Localizes primarily to intracellular membranes mostly to the endoplasmic reticulum.</text>
</comment>
<comment type="domain">
    <text evidence="2">The GBA (G-alpha binding and activating) motif mediates binding to the alpha subunits of guanine nucleotide-binding proteins (G proteins).</text>
</comment>
<proteinExistence type="evidence at transcript level"/>
<organism>
    <name type="scientific">Xenopus laevis</name>
    <name type="common">African clawed frog</name>
    <dbReference type="NCBI Taxonomy" id="8355"/>
    <lineage>
        <taxon>Eukaryota</taxon>
        <taxon>Metazoa</taxon>
        <taxon>Chordata</taxon>
        <taxon>Craniata</taxon>
        <taxon>Vertebrata</taxon>
        <taxon>Euteleostomi</taxon>
        <taxon>Amphibia</taxon>
        <taxon>Batrachia</taxon>
        <taxon>Anura</taxon>
        <taxon>Pipoidea</taxon>
        <taxon>Pipidae</taxon>
        <taxon>Xenopodinae</taxon>
        <taxon>Xenopus</taxon>
        <taxon>Xenopus</taxon>
    </lineage>
</organism>
<reference key="1">
    <citation type="submission" date="2005-11" db="EMBL/GenBank/DDBJ databases">
        <authorList>
            <consortium name="NIH - Xenopus Gene Collection (XGC) project"/>
        </authorList>
    </citation>
    <scope>NUCLEOTIDE SEQUENCE [LARGE SCALE MRNA]</scope>
    <source>
        <tissue>Testis</tissue>
    </source>
</reference>
<gene>
    <name type="primary">plcd4</name>
</gene>
<feature type="chain" id="PRO_0000306830" description="1-phosphatidylinositol 4,5-bisphosphate phosphodiesterase delta-4">
    <location>
        <begin position="1"/>
        <end position="758"/>
    </location>
</feature>
<feature type="domain" description="PH" evidence="4">
    <location>
        <begin position="16"/>
        <end position="124"/>
    </location>
</feature>
<feature type="domain" description="EF-hand 1" evidence="7">
    <location>
        <begin position="134"/>
        <end position="169"/>
    </location>
</feature>
<feature type="domain" description="EF-hand 2" evidence="7">
    <location>
        <begin position="170"/>
        <end position="205"/>
    </location>
</feature>
<feature type="domain" description="EF-hand 3" evidence="7">
    <location>
        <begin position="206"/>
        <end position="237"/>
    </location>
</feature>
<feature type="domain" description="PI-PLC X-box" evidence="5">
    <location>
        <begin position="290"/>
        <end position="435"/>
    </location>
</feature>
<feature type="domain" description="PI-PLC Y-box" evidence="6">
    <location>
        <begin position="486"/>
        <end position="602"/>
    </location>
</feature>
<feature type="domain" description="C2" evidence="3">
    <location>
        <begin position="602"/>
        <end position="731"/>
    </location>
</feature>
<feature type="region of interest" description="Substrate binding" evidence="1">
    <location>
        <begin position="26"/>
        <end position="53"/>
    </location>
</feature>
<feature type="region of interest" description="Disordered" evidence="8">
    <location>
        <begin position="446"/>
        <end position="479"/>
    </location>
</feature>
<feature type="short sequence motif" description="GBA" evidence="2">
    <location>
        <begin position="213"/>
        <end position="243"/>
    </location>
</feature>
<feature type="short sequence motif" description="PDZ-binding">
    <location>
        <begin position="726"/>
        <end position="729"/>
    </location>
</feature>
<feature type="compositionally biased region" description="Acidic residues" evidence="8">
    <location>
        <begin position="446"/>
        <end position="468"/>
    </location>
</feature>
<feature type="active site" evidence="5">
    <location>
        <position position="305"/>
    </location>
</feature>
<feature type="active site" evidence="5">
    <location>
        <position position="350"/>
    </location>
</feature>
<feature type="binding site" evidence="7">
    <location>
        <position position="147"/>
    </location>
    <ligand>
        <name>Ca(2+)</name>
        <dbReference type="ChEBI" id="CHEBI:29108"/>
        <label>1</label>
    </ligand>
</feature>
<feature type="binding site" evidence="7">
    <location>
        <position position="149"/>
    </location>
    <ligand>
        <name>Ca(2+)</name>
        <dbReference type="ChEBI" id="CHEBI:29108"/>
        <label>1</label>
    </ligand>
</feature>
<feature type="binding site" evidence="7">
    <location>
        <position position="151"/>
    </location>
    <ligand>
        <name>Ca(2+)</name>
        <dbReference type="ChEBI" id="CHEBI:29108"/>
        <label>1</label>
    </ligand>
</feature>
<feature type="binding site" evidence="7">
    <location>
        <position position="153"/>
    </location>
    <ligand>
        <name>Ca(2+)</name>
        <dbReference type="ChEBI" id="CHEBI:29108"/>
        <label>1</label>
    </ligand>
</feature>
<feature type="binding site" evidence="7">
    <location>
        <position position="158"/>
    </location>
    <ligand>
        <name>Ca(2+)</name>
        <dbReference type="ChEBI" id="CHEBI:29108"/>
        <label>1</label>
    </ligand>
</feature>
<feature type="binding site" evidence="7">
    <location>
        <position position="183"/>
    </location>
    <ligand>
        <name>Ca(2+)</name>
        <dbReference type="ChEBI" id="CHEBI:29108"/>
        <label>2</label>
    </ligand>
</feature>
<feature type="binding site" evidence="7">
    <location>
        <position position="185"/>
    </location>
    <ligand>
        <name>Ca(2+)</name>
        <dbReference type="ChEBI" id="CHEBI:29108"/>
        <label>2</label>
    </ligand>
</feature>
<feature type="binding site" evidence="7">
    <location>
        <position position="187"/>
    </location>
    <ligand>
        <name>Ca(2+)</name>
        <dbReference type="ChEBI" id="CHEBI:29108"/>
        <label>2</label>
    </ligand>
</feature>
<feature type="binding site" evidence="7">
    <location>
        <position position="189"/>
    </location>
    <ligand>
        <name>Ca(2+)</name>
        <dbReference type="ChEBI" id="CHEBI:29108"/>
        <label>2</label>
    </ligand>
</feature>
<feature type="binding site" evidence="7">
    <location>
        <position position="194"/>
    </location>
    <ligand>
        <name>Ca(2+)</name>
        <dbReference type="ChEBI" id="CHEBI:29108"/>
        <label>2</label>
    </ligand>
</feature>
<feature type="binding site" evidence="1">
    <location>
        <position position="306"/>
    </location>
    <ligand>
        <name>Ca(2+)</name>
        <dbReference type="ChEBI" id="CHEBI:29108"/>
        <label>3</label>
        <note>catalytic</note>
    </ligand>
</feature>
<feature type="binding site" evidence="1">
    <location>
        <position position="335"/>
    </location>
    <ligand>
        <name>Ca(2+)</name>
        <dbReference type="ChEBI" id="CHEBI:29108"/>
        <label>3</label>
        <note>catalytic</note>
    </ligand>
</feature>
<feature type="binding site" evidence="1">
    <location>
        <position position="337"/>
    </location>
    <ligand>
        <name>Ca(2+)</name>
        <dbReference type="ChEBI" id="CHEBI:29108"/>
        <label>3</label>
        <note>catalytic</note>
    </ligand>
</feature>
<feature type="binding site" evidence="1">
    <location>
        <position position="384"/>
    </location>
    <ligand>
        <name>Ca(2+)</name>
        <dbReference type="ChEBI" id="CHEBI:29108"/>
        <label>3</label>
        <note>catalytic</note>
    </ligand>
</feature>
<feature type="binding site" evidence="1">
    <location>
        <position position="433"/>
    </location>
    <ligand>
        <name>substrate</name>
    </ligand>
</feature>
<feature type="binding site" evidence="1">
    <location>
        <position position="435"/>
    </location>
    <ligand>
        <name>substrate</name>
    </ligand>
</feature>
<feature type="binding site" evidence="1">
    <location>
        <position position="515"/>
    </location>
    <ligand>
        <name>substrate</name>
    </ligand>
</feature>
<feature type="binding site" evidence="1">
    <location>
        <position position="542"/>
    </location>
    <ligand>
        <name>substrate</name>
    </ligand>
</feature>
<feature type="binding site" evidence="1">
    <location>
        <position position="645"/>
    </location>
    <ligand>
        <name>Ca(2+)</name>
        <dbReference type="ChEBI" id="CHEBI:29108"/>
        <label>4</label>
    </ligand>
</feature>
<feature type="binding site" evidence="1">
    <location>
        <position position="647"/>
    </location>
    <ligand>
        <name>Ca(2+)</name>
        <dbReference type="ChEBI" id="CHEBI:29108"/>
        <label>4</label>
    </ligand>
</feature>
<feature type="binding site" evidence="1">
    <location>
        <position position="671"/>
    </location>
    <ligand>
        <name>Ca(2+)</name>
        <dbReference type="ChEBI" id="CHEBI:29108"/>
        <label>4</label>
    </ligand>
</feature>
<feature type="binding site" evidence="1">
    <location>
        <position position="700"/>
    </location>
    <ligand>
        <name>Ca(2+)</name>
        <dbReference type="ChEBI" id="CHEBI:29108"/>
        <label>5</label>
    </ligand>
</feature>
<feature type="binding site" evidence="1">
    <location>
        <position position="701"/>
    </location>
    <ligand>
        <name>Ca(2+)</name>
        <dbReference type="ChEBI" id="CHEBI:29108"/>
        <label>5</label>
    </ligand>
</feature>
<feature type="binding site" evidence="1">
    <location>
        <position position="702"/>
    </location>
    <ligand>
        <name>Ca(2+)</name>
        <dbReference type="ChEBI" id="CHEBI:29108"/>
        <label>5</label>
    </ligand>
</feature>